<name>MOAC_CLOAB</name>
<reference key="1">
    <citation type="journal article" date="2001" name="J. Bacteriol.">
        <title>Genome sequence and comparative analysis of the solvent-producing bacterium Clostridium acetobutylicum.</title>
        <authorList>
            <person name="Noelling J."/>
            <person name="Breton G."/>
            <person name="Omelchenko M.V."/>
            <person name="Makarova K.S."/>
            <person name="Zeng Q."/>
            <person name="Gibson R."/>
            <person name="Lee H.M."/>
            <person name="Dubois J."/>
            <person name="Qiu D."/>
            <person name="Hitti J."/>
            <person name="Wolf Y.I."/>
            <person name="Tatusov R.L."/>
            <person name="Sabathe F."/>
            <person name="Doucette-Stamm L.A."/>
            <person name="Soucaille P."/>
            <person name="Daly M.J."/>
            <person name="Bennett G.N."/>
            <person name="Koonin E.V."/>
            <person name="Smith D.R."/>
        </authorList>
    </citation>
    <scope>NUCLEOTIDE SEQUENCE [LARGE SCALE GENOMIC DNA]</scope>
    <source>
        <strain>ATCC 824 / DSM 792 / JCM 1419 / IAM 19013 / LMG 5710 / NBRC 13948 / NRRL B-527 / VKM B-1787 / 2291 / W</strain>
    </source>
</reference>
<comment type="function">
    <text evidence="1">Catalyzes the conversion of (8S)-3',8-cyclo-7,8-dihydroguanosine 5'-triphosphate to cyclic pyranopterin monophosphate (cPMP).</text>
</comment>
<comment type="catalytic activity">
    <reaction evidence="1">
        <text>(8S)-3',8-cyclo-7,8-dihydroguanosine 5'-triphosphate = cyclic pyranopterin phosphate + diphosphate</text>
        <dbReference type="Rhea" id="RHEA:49580"/>
        <dbReference type="ChEBI" id="CHEBI:33019"/>
        <dbReference type="ChEBI" id="CHEBI:59648"/>
        <dbReference type="ChEBI" id="CHEBI:131766"/>
        <dbReference type="EC" id="4.6.1.17"/>
    </reaction>
</comment>
<comment type="pathway">
    <text evidence="1">Cofactor biosynthesis; molybdopterin biosynthesis.</text>
</comment>
<comment type="subunit">
    <text evidence="1">Homohexamer; trimer of dimers.</text>
</comment>
<comment type="similarity">
    <text evidence="1">Belongs to the MoaC family.</text>
</comment>
<accession>Q97HL9</accession>
<gene>
    <name evidence="1" type="primary">moaC</name>
    <name type="ordered locus">CA_C1992</name>
</gene>
<sequence>MSEVFTHINEEGRARMVDVSEKDNTIRQAIASGKISMEKDTLERIKEGTISKGDVLAVAQVGGIMGAKSTSQIIPMCHNILISNCDINFKFDFENSEIEIVAMTKTVGKTGIEMEALTAVSAAALTIYDMCKAIDREMVISDIMLVKKSGGKSGDFERVGL</sequence>
<feature type="chain" id="PRO_0000097793" description="Cyclic pyranopterin monophosphate synthase">
    <location>
        <begin position="1"/>
        <end position="161"/>
    </location>
</feature>
<feature type="active site" evidence="1">
    <location>
        <position position="129"/>
    </location>
</feature>
<feature type="binding site" evidence="1">
    <location>
        <begin position="76"/>
        <end position="78"/>
    </location>
    <ligand>
        <name>substrate</name>
    </ligand>
</feature>
<feature type="binding site" evidence="1">
    <location>
        <begin position="114"/>
        <end position="115"/>
    </location>
    <ligand>
        <name>substrate</name>
    </ligand>
</feature>
<protein>
    <recommendedName>
        <fullName evidence="1">Cyclic pyranopterin monophosphate synthase</fullName>
        <ecNumber evidence="1">4.6.1.17</ecNumber>
    </recommendedName>
    <alternativeName>
        <fullName evidence="1">Molybdenum cofactor biosynthesis protein C</fullName>
    </alternativeName>
</protein>
<organism>
    <name type="scientific">Clostridium acetobutylicum (strain ATCC 824 / DSM 792 / JCM 1419 / IAM 19013 / LMG 5710 / NBRC 13948 / NRRL B-527 / VKM B-1787 / 2291 / W)</name>
    <dbReference type="NCBI Taxonomy" id="272562"/>
    <lineage>
        <taxon>Bacteria</taxon>
        <taxon>Bacillati</taxon>
        <taxon>Bacillota</taxon>
        <taxon>Clostridia</taxon>
        <taxon>Eubacteriales</taxon>
        <taxon>Clostridiaceae</taxon>
        <taxon>Clostridium</taxon>
    </lineage>
</organism>
<proteinExistence type="inferred from homology"/>
<dbReference type="EC" id="4.6.1.17" evidence="1"/>
<dbReference type="EMBL" id="AE001437">
    <property type="protein sequence ID" value="AAK79951.1"/>
    <property type="molecule type" value="Genomic_DNA"/>
</dbReference>
<dbReference type="PIR" id="D97145">
    <property type="entry name" value="D97145"/>
</dbReference>
<dbReference type="RefSeq" id="NP_348611.1">
    <property type="nucleotide sequence ID" value="NC_003030.1"/>
</dbReference>
<dbReference type="RefSeq" id="WP_010965292.1">
    <property type="nucleotide sequence ID" value="NC_003030.1"/>
</dbReference>
<dbReference type="SMR" id="Q97HL9"/>
<dbReference type="STRING" id="272562.CA_C1992"/>
<dbReference type="GeneID" id="44998480"/>
<dbReference type="KEGG" id="cac:CA_C1992"/>
<dbReference type="PATRIC" id="fig|272562.8.peg.2199"/>
<dbReference type="eggNOG" id="COG0315">
    <property type="taxonomic scope" value="Bacteria"/>
</dbReference>
<dbReference type="HOGENOM" id="CLU_074693_1_1_9"/>
<dbReference type="OrthoDB" id="9794429at2"/>
<dbReference type="UniPathway" id="UPA00344"/>
<dbReference type="Proteomes" id="UP000000814">
    <property type="component" value="Chromosome"/>
</dbReference>
<dbReference type="GO" id="GO:0061799">
    <property type="term" value="F:cyclic pyranopterin monophosphate synthase activity"/>
    <property type="evidence" value="ECO:0007669"/>
    <property type="project" value="UniProtKB-UniRule"/>
</dbReference>
<dbReference type="GO" id="GO:0006777">
    <property type="term" value="P:Mo-molybdopterin cofactor biosynthetic process"/>
    <property type="evidence" value="ECO:0007669"/>
    <property type="project" value="UniProtKB-UniRule"/>
</dbReference>
<dbReference type="CDD" id="cd01420">
    <property type="entry name" value="MoaC_PE"/>
    <property type="match status" value="1"/>
</dbReference>
<dbReference type="Gene3D" id="3.30.70.640">
    <property type="entry name" value="Molybdopterin cofactor biosynthesis C (MoaC) domain"/>
    <property type="match status" value="1"/>
</dbReference>
<dbReference type="HAMAP" id="MF_01224_B">
    <property type="entry name" value="MoaC_B"/>
    <property type="match status" value="1"/>
</dbReference>
<dbReference type="InterPro" id="IPR023045">
    <property type="entry name" value="MoaC"/>
</dbReference>
<dbReference type="InterPro" id="IPR047594">
    <property type="entry name" value="MoaC_bact/euk"/>
</dbReference>
<dbReference type="InterPro" id="IPR036522">
    <property type="entry name" value="MoaC_sf"/>
</dbReference>
<dbReference type="InterPro" id="IPR050105">
    <property type="entry name" value="MoCo_biosynth_MoaA/MoaC"/>
</dbReference>
<dbReference type="InterPro" id="IPR002820">
    <property type="entry name" value="Mopterin_CF_biosynth-C_dom"/>
</dbReference>
<dbReference type="NCBIfam" id="TIGR00581">
    <property type="entry name" value="moaC"/>
    <property type="match status" value="1"/>
</dbReference>
<dbReference type="NCBIfam" id="NF006870">
    <property type="entry name" value="PRK09364.1"/>
    <property type="match status" value="1"/>
</dbReference>
<dbReference type="PANTHER" id="PTHR22960">
    <property type="entry name" value="MOLYBDOPTERIN COFACTOR SYNTHESIS PROTEIN A"/>
    <property type="match status" value="1"/>
</dbReference>
<dbReference type="Pfam" id="PF01967">
    <property type="entry name" value="MoaC"/>
    <property type="match status" value="1"/>
</dbReference>
<dbReference type="SUPFAM" id="SSF55040">
    <property type="entry name" value="Molybdenum cofactor biosynthesis protein C, MoaC"/>
    <property type="match status" value="1"/>
</dbReference>
<evidence type="ECO:0000255" key="1">
    <source>
        <dbReference type="HAMAP-Rule" id="MF_01224"/>
    </source>
</evidence>
<keyword id="KW-0456">Lyase</keyword>
<keyword id="KW-0501">Molybdenum cofactor biosynthesis</keyword>
<keyword id="KW-1185">Reference proteome</keyword>